<dbReference type="EMBL" id="CR382137">
    <property type="protein sequence ID" value="CAG87957.2"/>
    <property type="molecule type" value="Genomic_DNA"/>
</dbReference>
<dbReference type="RefSeq" id="XP_459721.2">
    <property type="nucleotide sequence ID" value="XM_459721.1"/>
</dbReference>
<dbReference type="SMR" id="Q6BPZ9"/>
<dbReference type="FunCoup" id="Q6BPZ9">
    <property type="interactions" value="311"/>
</dbReference>
<dbReference type="STRING" id="284592.Q6BPZ9"/>
<dbReference type="GeneID" id="2902791"/>
<dbReference type="KEGG" id="dha:DEHA2E09548g"/>
<dbReference type="VEuPathDB" id="FungiDB:DEHA2E09548g"/>
<dbReference type="eggNOG" id="KOG0995">
    <property type="taxonomic scope" value="Eukaryota"/>
</dbReference>
<dbReference type="HOGENOM" id="CLU_012583_1_0_1"/>
<dbReference type="InParanoid" id="Q6BPZ9"/>
<dbReference type="OMA" id="PSHKFQK"/>
<dbReference type="OrthoDB" id="7459479at2759"/>
<dbReference type="Proteomes" id="UP000000599">
    <property type="component" value="Chromosome E"/>
</dbReference>
<dbReference type="GO" id="GO:0031262">
    <property type="term" value="C:Ndc80 complex"/>
    <property type="evidence" value="ECO:0000250"/>
    <property type="project" value="UniProtKB"/>
</dbReference>
<dbReference type="GO" id="GO:0005634">
    <property type="term" value="C:nucleus"/>
    <property type="evidence" value="ECO:0007669"/>
    <property type="project" value="UniProtKB-SubCell"/>
</dbReference>
<dbReference type="GO" id="GO:0008017">
    <property type="term" value="F:microtubule binding"/>
    <property type="evidence" value="ECO:0000250"/>
    <property type="project" value="UniProtKB"/>
</dbReference>
<dbReference type="GO" id="GO:0051301">
    <property type="term" value="P:cell division"/>
    <property type="evidence" value="ECO:0007669"/>
    <property type="project" value="UniProtKB-KW"/>
</dbReference>
<dbReference type="GO" id="GO:1990758">
    <property type="term" value="P:mitotic sister chromatid biorientation"/>
    <property type="evidence" value="ECO:0000250"/>
    <property type="project" value="UniProtKB"/>
</dbReference>
<dbReference type="FunFam" id="1.10.418.30:FF:000001">
    <property type="entry name" value="Probable kinetochore protein ndc80"/>
    <property type="match status" value="1"/>
</dbReference>
<dbReference type="Gene3D" id="6.10.250.1950">
    <property type="match status" value="1"/>
</dbReference>
<dbReference type="Gene3D" id="1.10.418.30">
    <property type="entry name" value="Ncd80 complex, Ncd80 subunit"/>
    <property type="match status" value="1"/>
</dbReference>
<dbReference type="InterPro" id="IPR040967">
    <property type="entry name" value="DUF5595"/>
</dbReference>
<dbReference type="InterPro" id="IPR005550">
    <property type="entry name" value="Kinetochore_Ndc80"/>
</dbReference>
<dbReference type="InterPro" id="IPR055260">
    <property type="entry name" value="Ndc80_CH"/>
</dbReference>
<dbReference type="InterPro" id="IPR038273">
    <property type="entry name" value="Ndc80_sf"/>
</dbReference>
<dbReference type="PANTHER" id="PTHR10643">
    <property type="entry name" value="KINETOCHORE PROTEIN NDC80"/>
    <property type="match status" value="1"/>
</dbReference>
<dbReference type="PANTHER" id="PTHR10643:SF2">
    <property type="entry name" value="KINETOCHORE PROTEIN NDC80 HOMOLOG"/>
    <property type="match status" value="1"/>
</dbReference>
<dbReference type="Pfam" id="PF18077">
    <property type="entry name" value="DUF5595"/>
    <property type="match status" value="1"/>
</dbReference>
<dbReference type="Pfam" id="PF03801">
    <property type="entry name" value="Ndc80_HEC"/>
    <property type="match status" value="1"/>
</dbReference>
<comment type="function">
    <text evidence="1">Acts as a component of the essential kinetochore-associated NDC80 complex, which is required for chromosome segregation and spindle checkpoint activity.</text>
</comment>
<comment type="subunit">
    <text evidence="1">Component of the NDC80 complex, which consists of NDC80, NUF2, SPC24 and SPC25.</text>
</comment>
<comment type="subcellular location">
    <subcellularLocation>
        <location evidence="1">Nucleus</location>
    </subcellularLocation>
    <subcellularLocation>
        <location evidence="1">Chromosome</location>
        <location evidence="1">Centromere</location>
        <location evidence="1">Kinetochore</location>
    </subcellularLocation>
    <text evidence="1">Associated with kinetochores.</text>
</comment>
<comment type="similarity">
    <text evidence="4">Belongs to the NDC80/HEC1 family.</text>
</comment>
<accession>Q6BPZ9</accession>
<keyword id="KW-0131">Cell cycle</keyword>
<keyword id="KW-0132">Cell division</keyword>
<keyword id="KW-0137">Centromere</keyword>
<keyword id="KW-0158">Chromosome</keyword>
<keyword id="KW-0175">Coiled coil</keyword>
<keyword id="KW-0995">Kinetochore</keyword>
<keyword id="KW-0498">Mitosis</keyword>
<keyword id="KW-0539">Nucleus</keyword>
<keyword id="KW-1185">Reference proteome</keyword>
<feature type="chain" id="PRO_0000246637" description="Probable kinetochore protein NDC80">
    <location>
        <begin position="1"/>
        <end position="650"/>
    </location>
</feature>
<feature type="region of interest" description="Disordered" evidence="3">
    <location>
        <begin position="43"/>
        <end position="119"/>
    </location>
</feature>
<feature type="coiled-coil region" evidence="2">
    <location>
        <begin position="265"/>
        <end position="443"/>
    </location>
</feature>
<feature type="coiled-coil region" evidence="2">
    <location>
        <begin position="510"/>
        <end position="601"/>
    </location>
</feature>
<feature type="compositionally biased region" description="Polar residues" evidence="3">
    <location>
        <begin position="50"/>
        <end position="65"/>
    </location>
</feature>
<feature type="compositionally biased region" description="Low complexity" evidence="3">
    <location>
        <begin position="85"/>
        <end position="111"/>
    </location>
</feature>
<name>NDC80_DEBHA</name>
<reference key="1">
    <citation type="journal article" date="2004" name="Nature">
        <title>Genome evolution in yeasts.</title>
        <authorList>
            <person name="Dujon B."/>
            <person name="Sherman D."/>
            <person name="Fischer G."/>
            <person name="Durrens P."/>
            <person name="Casaregola S."/>
            <person name="Lafontaine I."/>
            <person name="de Montigny J."/>
            <person name="Marck C."/>
            <person name="Neuveglise C."/>
            <person name="Talla E."/>
            <person name="Goffard N."/>
            <person name="Frangeul L."/>
            <person name="Aigle M."/>
            <person name="Anthouard V."/>
            <person name="Babour A."/>
            <person name="Barbe V."/>
            <person name="Barnay S."/>
            <person name="Blanchin S."/>
            <person name="Beckerich J.-M."/>
            <person name="Beyne E."/>
            <person name="Bleykasten C."/>
            <person name="Boisrame A."/>
            <person name="Boyer J."/>
            <person name="Cattolico L."/>
            <person name="Confanioleri F."/>
            <person name="de Daruvar A."/>
            <person name="Despons L."/>
            <person name="Fabre E."/>
            <person name="Fairhead C."/>
            <person name="Ferry-Dumazet H."/>
            <person name="Groppi A."/>
            <person name="Hantraye F."/>
            <person name="Hennequin C."/>
            <person name="Jauniaux N."/>
            <person name="Joyet P."/>
            <person name="Kachouri R."/>
            <person name="Kerrest A."/>
            <person name="Koszul R."/>
            <person name="Lemaire M."/>
            <person name="Lesur I."/>
            <person name="Ma L."/>
            <person name="Muller H."/>
            <person name="Nicaud J.-M."/>
            <person name="Nikolski M."/>
            <person name="Oztas S."/>
            <person name="Ozier-Kalogeropoulos O."/>
            <person name="Pellenz S."/>
            <person name="Potier S."/>
            <person name="Richard G.-F."/>
            <person name="Straub M.-L."/>
            <person name="Suleau A."/>
            <person name="Swennen D."/>
            <person name="Tekaia F."/>
            <person name="Wesolowski-Louvel M."/>
            <person name="Westhof E."/>
            <person name="Wirth B."/>
            <person name="Zeniou-Meyer M."/>
            <person name="Zivanovic Y."/>
            <person name="Bolotin-Fukuhara M."/>
            <person name="Thierry A."/>
            <person name="Bouchier C."/>
            <person name="Caudron B."/>
            <person name="Scarpelli C."/>
            <person name="Gaillardin C."/>
            <person name="Weissenbach J."/>
            <person name="Wincker P."/>
            <person name="Souciet J.-L."/>
        </authorList>
    </citation>
    <scope>NUCLEOTIDE SEQUENCE [LARGE SCALE GENOMIC DNA]</scope>
    <source>
        <strain>ATCC 36239 / CBS 767 / BCRC 21394 / JCM 1990 / NBRC 0083 / IGC 2968</strain>
    </source>
</reference>
<gene>
    <name type="primary">NDC80</name>
    <name type="ordered locus">DEHA2E09548g</name>
</gene>
<evidence type="ECO:0000250" key="1"/>
<evidence type="ECO:0000255" key="2"/>
<evidence type="ECO:0000256" key="3">
    <source>
        <dbReference type="SAM" id="MobiDB-lite"/>
    </source>
</evidence>
<evidence type="ECO:0000305" key="4"/>
<protein>
    <recommendedName>
        <fullName>Probable kinetochore protein NDC80</fullName>
    </recommendedName>
</protein>
<proteinExistence type="inferred from homology"/>
<organism>
    <name type="scientific">Debaryomyces hansenii (strain ATCC 36239 / CBS 767 / BCRC 21394 / JCM 1990 / NBRC 0083 / IGC 2968)</name>
    <name type="common">Yeast</name>
    <name type="synonym">Torulaspora hansenii</name>
    <dbReference type="NCBI Taxonomy" id="284592"/>
    <lineage>
        <taxon>Eukaryota</taxon>
        <taxon>Fungi</taxon>
        <taxon>Dikarya</taxon>
        <taxon>Ascomycota</taxon>
        <taxon>Saccharomycotina</taxon>
        <taxon>Pichiomycetes</taxon>
        <taxon>Debaryomycetaceae</taxon>
        <taxon>Debaryomyces</taxon>
    </lineage>
</organism>
<sequence>MNVDYPMNNIPQASSLLRKNNGKRLSMASAARTSLLGNLNLNGTSGGASGRNSNIIDSSSLSMGNTGKRRSLLSTPASINRRRQSSLLQAPMSSSQMSSQSQQASQQTQAPFNQDQRPLRDKNYQTLIQQEIYDFLLANKFELEMNHPLTFKTLKQPTQKDFVVIFQFLYNKIDPYYRFTKSIETEVFLLLKILNYPYLDGINRSQISAVGGQNWPNFLGMLYWLVKLNLSVLNLNSKVDLISPDDEFDKIFINYITQSYRAFIDERDDYSEYYDEMKSRFDELNNNIIQDIENISNENNELLNQYNELNGQLDILENSEKKSKALENDLIKFKAYIETMESRKSKWSEILNKITQEIGNCEVELNNIESVKRDYEAQIGQQGLTPNDIDNLNTERDKLSKSIDLISNSLEDLKDVYHNKQINLQKNYQSLENFLKQYNNLIYKIQLKNHNYDYNFEINFRNNTIINETPDLLKPNEIINKNLKDEKIQLLNYKSIINTNVHMHQDEQIKLQEQIDLISELIMERREEIETLEAKLTANKSTYDEIYETMINDTTTYSMQIEKLERELRSIKINTNQGFIEVENKFQNIQIEYDELLYEIHSNRSILHDKIQKIIESTIGFKINIQSNLEDLENLAFDEFEKEDKKLNKN</sequence>